<gene>
    <name type="primary">Prelid3b</name>
    <name type="synonym">Slmo2</name>
</gene>
<reference key="1">
    <citation type="journal article" date="2004" name="Genome Res.">
        <title>The status, quality, and expansion of the NIH full-length cDNA project: the Mammalian Gene Collection (MGC).</title>
        <authorList>
            <consortium name="The MGC Project Team"/>
        </authorList>
    </citation>
    <scope>NUCLEOTIDE SEQUENCE [LARGE SCALE MRNA]</scope>
    <source>
        <tissue>Pituitary</tissue>
    </source>
</reference>
<reference key="2">
    <citation type="journal article" date="2006" name="Proc. Natl. Acad. Sci. U.S.A.">
        <title>Quantitative phosphoproteomics of vasopressin-sensitive renal cells: regulation of aquaporin-2 phosphorylation at two sites.</title>
        <authorList>
            <person name="Hoffert J.D."/>
            <person name="Pisitkun T."/>
            <person name="Wang G."/>
            <person name="Shen R.-F."/>
            <person name="Knepper M.A."/>
        </authorList>
    </citation>
    <scope>PHOSPHORYLATION [LARGE SCALE ANALYSIS] AT SER-46 AND SER-51</scope>
    <scope>IDENTIFICATION BY MASS SPECTROMETRY [LARGE SCALE ANALYSIS]</scope>
</reference>
<evidence type="ECO:0000255" key="1">
    <source>
        <dbReference type="PROSITE-ProRule" id="PRU00158"/>
    </source>
</evidence>
<evidence type="ECO:0000305" key="2"/>
<evidence type="ECO:0007744" key="3">
    <source>
    </source>
</evidence>
<proteinExistence type="evidence at protein level"/>
<dbReference type="EMBL" id="BC060590">
    <property type="protein sequence ID" value="AAH60590.1"/>
    <property type="molecule type" value="mRNA"/>
</dbReference>
<dbReference type="RefSeq" id="NP_001009543.1">
    <property type="nucleotide sequence ID" value="NM_001009543.2"/>
</dbReference>
<dbReference type="SMR" id="Q6P9U4"/>
<dbReference type="FunCoup" id="Q6P9U4">
    <property type="interactions" value="2214"/>
</dbReference>
<dbReference type="STRING" id="10116.ENSRNOP00000067016"/>
<dbReference type="iPTMnet" id="Q6P9U4"/>
<dbReference type="PhosphoSitePlus" id="Q6P9U4"/>
<dbReference type="jPOST" id="Q6P9U4"/>
<dbReference type="PaxDb" id="10116-ENSRNOP00000067016"/>
<dbReference type="Ensembl" id="ENSRNOT00000115092.1">
    <property type="protein sequence ID" value="ENSRNOP00000083704.1"/>
    <property type="gene ID" value="ENSRNOG00000046644.3"/>
</dbReference>
<dbReference type="GeneID" id="494346"/>
<dbReference type="KEGG" id="rno:494346"/>
<dbReference type="AGR" id="RGD:1594395"/>
<dbReference type="CTD" id="51012"/>
<dbReference type="RGD" id="1594395">
    <property type="gene designation" value="Prelid3b"/>
</dbReference>
<dbReference type="eggNOG" id="KOG3336">
    <property type="taxonomic scope" value="Eukaryota"/>
</dbReference>
<dbReference type="GeneTree" id="ENSGT00950000182810"/>
<dbReference type="InParanoid" id="Q6P9U4"/>
<dbReference type="OMA" id="YCPWNEK"/>
<dbReference type="OrthoDB" id="407630at2759"/>
<dbReference type="PhylomeDB" id="Q6P9U4"/>
<dbReference type="PRO" id="PR:Q6P9U4"/>
<dbReference type="Proteomes" id="UP000002494">
    <property type="component" value="Chromosome 3"/>
</dbReference>
<dbReference type="GO" id="GO:0005758">
    <property type="term" value="C:mitochondrial intermembrane space"/>
    <property type="evidence" value="ECO:0000318"/>
    <property type="project" value="GO_Central"/>
</dbReference>
<dbReference type="GO" id="GO:1990050">
    <property type="term" value="F:phosphatidic acid transfer activity"/>
    <property type="evidence" value="ECO:0000318"/>
    <property type="project" value="GO_Central"/>
</dbReference>
<dbReference type="GO" id="GO:0015914">
    <property type="term" value="P:phospholipid transport"/>
    <property type="evidence" value="ECO:0000318"/>
    <property type="project" value="GO_Central"/>
</dbReference>
<dbReference type="InterPro" id="IPR006797">
    <property type="entry name" value="PRELI/MSF1_dom"/>
</dbReference>
<dbReference type="InterPro" id="IPR037365">
    <property type="entry name" value="Slowmo/Ups"/>
</dbReference>
<dbReference type="PANTHER" id="PTHR11158">
    <property type="entry name" value="MSF1/PX19 RELATED"/>
    <property type="match status" value="1"/>
</dbReference>
<dbReference type="Pfam" id="PF04707">
    <property type="entry name" value="PRELI"/>
    <property type="match status" value="1"/>
</dbReference>
<dbReference type="PROSITE" id="PS50904">
    <property type="entry name" value="PRELI_MSF1"/>
    <property type="match status" value="1"/>
</dbReference>
<accession>Q6P9U4</accession>
<sequence>MKIWTSEHVFDHPWETVTTAAMQKYPNPMNPSVVGVDVLDRHVDPSGKLHSHRLLSTEWGLPSIVKSLIGAARTKTYVQEHSVVDPIRRTMELKSTNISFTNMVSVDERLTYKPHPQDPEKTVLTQEALITVKGVSLSSYLEGLMASTISSNANKGREAMEWVIHKLNAEIEELAASARGSIRTPMAAAAALVDK</sequence>
<organism>
    <name type="scientific">Rattus norvegicus</name>
    <name type="common">Rat</name>
    <dbReference type="NCBI Taxonomy" id="10116"/>
    <lineage>
        <taxon>Eukaryota</taxon>
        <taxon>Metazoa</taxon>
        <taxon>Chordata</taxon>
        <taxon>Craniata</taxon>
        <taxon>Vertebrata</taxon>
        <taxon>Euteleostomi</taxon>
        <taxon>Mammalia</taxon>
        <taxon>Eutheria</taxon>
        <taxon>Euarchontoglires</taxon>
        <taxon>Glires</taxon>
        <taxon>Rodentia</taxon>
        <taxon>Myomorpha</taxon>
        <taxon>Muroidea</taxon>
        <taxon>Muridae</taxon>
        <taxon>Murinae</taxon>
        <taxon>Rattus</taxon>
    </lineage>
</organism>
<name>PLD3B_RAT</name>
<protein>
    <recommendedName>
        <fullName>PRELI domain containing protein 3B</fullName>
    </recommendedName>
    <alternativeName>
        <fullName>Protein slowmo homolog 2</fullName>
    </alternativeName>
</protein>
<comment type="similarity">
    <text evidence="2">Belongs to the slowmo family.</text>
</comment>
<keyword id="KW-0597">Phosphoprotein</keyword>
<keyword id="KW-1185">Reference proteome</keyword>
<feature type="chain" id="PRO_0000327685" description="PRELI domain containing protein 3B">
    <location>
        <begin position="1"/>
        <end position="195"/>
    </location>
</feature>
<feature type="domain" description="PRELI/MSF1" evidence="1">
    <location>
        <begin position="1"/>
        <end position="172"/>
    </location>
</feature>
<feature type="modified residue" description="Phosphoserine" evidence="3">
    <location>
        <position position="46"/>
    </location>
</feature>
<feature type="modified residue" description="Phosphoserine" evidence="3">
    <location>
        <position position="51"/>
    </location>
</feature>